<comment type="function">
    <text evidence="1">Catalyzes the interconversion of methylthioribose-1-phosphate (MTR-1-P) into methylthioribulose-1-phosphate (MTRu-1-P).</text>
</comment>
<comment type="catalytic activity">
    <reaction evidence="1">
        <text>5-(methylsulfanyl)-alpha-D-ribose 1-phosphate = 5-(methylsulfanyl)-D-ribulose 1-phosphate</text>
        <dbReference type="Rhea" id="RHEA:19989"/>
        <dbReference type="ChEBI" id="CHEBI:58533"/>
        <dbReference type="ChEBI" id="CHEBI:58548"/>
        <dbReference type="EC" id="5.3.1.23"/>
    </reaction>
</comment>
<comment type="pathway">
    <text evidence="1">Amino-acid biosynthesis; L-methionine biosynthesis via salvage pathway; L-methionine from S-methyl-5-thio-alpha-D-ribose 1-phosphate: step 1/6.</text>
</comment>
<comment type="subcellular location">
    <subcellularLocation>
        <location evidence="1">Cytoplasm</location>
    </subcellularLocation>
    <subcellularLocation>
        <location evidence="1">Nucleus</location>
    </subcellularLocation>
</comment>
<comment type="similarity">
    <text evidence="1">Belongs to the eIF-2B alpha/beta/delta subunits family. MtnA subfamily.</text>
</comment>
<organism>
    <name type="scientific">Xenopus laevis</name>
    <name type="common">African clawed frog</name>
    <dbReference type="NCBI Taxonomy" id="8355"/>
    <lineage>
        <taxon>Eukaryota</taxon>
        <taxon>Metazoa</taxon>
        <taxon>Chordata</taxon>
        <taxon>Craniata</taxon>
        <taxon>Vertebrata</taxon>
        <taxon>Euteleostomi</taxon>
        <taxon>Amphibia</taxon>
        <taxon>Batrachia</taxon>
        <taxon>Anura</taxon>
        <taxon>Pipoidea</taxon>
        <taxon>Pipidae</taxon>
        <taxon>Xenopodinae</taxon>
        <taxon>Xenopus</taxon>
        <taxon>Xenopus</taxon>
    </lineage>
</organism>
<name>MTNA_XENLA</name>
<feature type="chain" id="PRO_0000317328" description="Methylthioribose-1-phosphate isomerase">
    <location>
        <begin position="1"/>
        <end position="354"/>
    </location>
</feature>
<feature type="active site" description="Proton donor" evidence="1">
    <location>
        <position position="246"/>
    </location>
</feature>
<feature type="site" description="Transition state stabilizer" evidence="1">
    <location>
        <position position="166"/>
    </location>
</feature>
<evidence type="ECO:0000255" key="1">
    <source>
        <dbReference type="HAMAP-Rule" id="MF_03119"/>
    </source>
</evidence>
<accession>Q4FZP2</accession>
<dbReference type="EC" id="5.3.1.23" evidence="1"/>
<dbReference type="EMBL" id="BC099301">
    <property type="protein sequence ID" value="AAH99301.1"/>
    <property type="molecule type" value="mRNA"/>
</dbReference>
<dbReference type="RefSeq" id="NP_001090076.1">
    <property type="nucleotide sequence ID" value="NM_001096607.1"/>
</dbReference>
<dbReference type="SMR" id="Q4FZP2"/>
<dbReference type="BioGRID" id="592932">
    <property type="interactions" value="2"/>
</dbReference>
<dbReference type="GeneID" id="735151"/>
<dbReference type="KEGG" id="xla:735151"/>
<dbReference type="AGR" id="Xenbase:XB-GENE-974915"/>
<dbReference type="CTD" id="735151"/>
<dbReference type="Xenbase" id="XB-GENE-974915">
    <property type="gene designation" value="mri1.L"/>
</dbReference>
<dbReference type="OMA" id="RLWVDET"/>
<dbReference type="OrthoDB" id="2461at2759"/>
<dbReference type="UniPathway" id="UPA00904">
    <property type="reaction ID" value="UER00874"/>
</dbReference>
<dbReference type="Proteomes" id="UP000186698">
    <property type="component" value="Chromosome 3L"/>
</dbReference>
<dbReference type="Bgee" id="735151">
    <property type="expression patterns" value="Expressed in oocyte and 20 other cell types or tissues"/>
</dbReference>
<dbReference type="GO" id="GO:0005737">
    <property type="term" value="C:cytoplasm"/>
    <property type="evidence" value="ECO:0007669"/>
    <property type="project" value="UniProtKB-SubCell"/>
</dbReference>
<dbReference type="GO" id="GO:0005634">
    <property type="term" value="C:nucleus"/>
    <property type="evidence" value="ECO:0007669"/>
    <property type="project" value="UniProtKB-SubCell"/>
</dbReference>
<dbReference type="GO" id="GO:0046523">
    <property type="term" value="F:S-methyl-5-thioribose-1-phosphate isomerase activity"/>
    <property type="evidence" value="ECO:0000318"/>
    <property type="project" value="GO_Central"/>
</dbReference>
<dbReference type="GO" id="GO:0019509">
    <property type="term" value="P:L-methionine salvage from methylthioadenosine"/>
    <property type="evidence" value="ECO:0000318"/>
    <property type="project" value="GO_Central"/>
</dbReference>
<dbReference type="FunFam" id="1.20.120.420:FF:000003">
    <property type="entry name" value="Methylthioribose-1-phosphate isomerase"/>
    <property type="match status" value="1"/>
</dbReference>
<dbReference type="FunFam" id="3.40.50.10470:FF:000003">
    <property type="entry name" value="Methylthioribose-1-phosphate isomerase"/>
    <property type="match status" value="1"/>
</dbReference>
<dbReference type="Gene3D" id="1.20.120.420">
    <property type="entry name" value="translation initiation factor eif-2b, domain 1"/>
    <property type="match status" value="1"/>
</dbReference>
<dbReference type="Gene3D" id="3.40.50.10470">
    <property type="entry name" value="Translation initiation factor eif-2b, domain 2"/>
    <property type="match status" value="1"/>
</dbReference>
<dbReference type="HAMAP" id="MF_01678">
    <property type="entry name" value="Salvage_MtnA"/>
    <property type="match status" value="1"/>
</dbReference>
<dbReference type="InterPro" id="IPR000649">
    <property type="entry name" value="IF-2B-related"/>
</dbReference>
<dbReference type="InterPro" id="IPR005251">
    <property type="entry name" value="IF-M1Pi"/>
</dbReference>
<dbReference type="InterPro" id="IPR042529">
    <property type="entry name" value="IF_2B-like_C"/>
</dbReference>
<dbReference type="InterPro" id="IPR011559">
    <property type="entry name" value="Initiation_fac_2B_a/b/d"/>
</dbReference>
<dbReference type="InterPro" id="IPR027363">
    <property type="entry name" value="M1Pi_N"/>
</dbReference>
<dbReference type="InterPro" id="IPR037171">
    <property type="entry name" value="NagB/RpiA_transferase-like"/>
</dbReference>
<dbReference type="NCBIfam" id="TIGR00524">
    <property type="entry name" value="eIF-2B_rel"/>
    <property type="match status" value="1"/>
</dbReference>
<dbReference type="NCBIfam" id="NF004326">
    <property type="entry name" value="PRK05720.1"/>
    <property type="match status" value="1"/>
</dbReference>
<dbReference type="NCBIfam" id="TIGR00512">
    <property type="entry name" value="salvage_mtnA"/>
    <property type="match status" value="1"/>
</dbReference>
<dbReference type="PANTHER" id="PTHR43475">
    <property type="entry name" value="METHYLTHIORIBOSE-1-PHOSPHATE ISOMERASE"/>
    <property type="match status" value="1"/>
</dbReference>
<dbReference type="PANTHER" id="PTHR43475:SF1">
    <property type="entry name" value="METHYLTHIORIBOSE-1-PHOSPHATE ISOMERASE"/>
    <property type="match status" value="1"/>
</dbReference>
<dbReference type="Pfam" id="PF01008">
    <property type="entry name" value="IF-2B"/>
    <property type="match status" value="1"/>
</dbReference>
<dbReference type="SUPFAM" id="SSF100950">
    <property type="entry name" value="NagB/RpiA/CoA transferase-like"/>
    <property type="match status" value="1"/>
</dbReference>
<sequence length="354" mass="38140">MSLESVRYSRGSLQVLNQLLLPHKSEYEPVTGVQQGADAIRTMKVRGAPAIAIVGVLSLAVELTTKPCQDVPSLITFVRESLHHLVSARPTAVNMKKAADELNAFLAEEADKPGATSQRLTESVVQWAESLLKKDVEDNQMIGDFGAKHILEKAGPTEKVCMLTHCNTGSLATAGYGTALGVVRSLHALGRLSHVFCTETRPYNQGSRLTAYELVYEKIPATLITDSMASVTMRERKVTAVVVGADRVVANGDTANKIGTYQLAIIAKYHGIPFYVAAPSTSCDLSLPTGGSIVIEERPSHELTDINGIRIAAPGIDVWNPAFDVTPHELITGIITERGVFKPEELKDGLTKGQ</sequence>
<keyword id="KW-0028">Amino-acid biosynthesis</keyword>
<keyword id="KW-0963">Cytoplasm</keyword>
<keyword id="KW-0413">Isomerase</keyword>
<keyword id="KW-0486">Methionine biosynthesis</keyword>
<keyword id="KW-0539">Nucleus</keyword>
<keyword id="KW-1185">Reference proteome</keyword>
<protein>
    <recommendedName>
        <fullName evidence="1">Methylthioribose-1-phosphate isomerase</fullName>
        <shortName evidence="1">M1Pi</shortName>
        <shortName evidence="1">MTR-1-P isomerase</shortName>
        <ecNumber evidence="1">5.3.1.23</ecNumber>
    </recommendedName>
    <alternativeName>
        <fullName evidence="1">S-methyl-5-thioribose-1-phosphate isomerase</fullName>
    </alternativeName>
    <alternativeName>
        <fullName evidence="1">Translation initiation factor eIF-2B subunit alpha/beta/delta-like protein</fullName>
    </alternativeName>
</protein>
<reference key="1">
    <citation type="submission" date="2005-07" db="EMBL/GenBank/DDBJ databases">
        <authorList>
            <consortium name="NIH - Xenopus Gene Collection (XGC) project"/>
        </authorList>
    </citation>
    <scope>NUCLEOTIDE SEQUENCE [LARGE SCALE MRNA]</scope>
</reference>
<gene>
    <name type="primary">mri1</name>
</gene>
<proteinExistence type="evidence at transcript level"/>